<gene>
    <name evidence="1" type="primary">dnaK</name>
    <name type="ordered locus">BG0529</name>
</gene>
<feature type="chain" id="PRO_0000225942" description="Chaperone protein DnaK">
    <location>
        <begin position="1"/>
        <end position="635"/>
    </location>
</feature>
<feature type="region of interest" description="Disordered" evidence="2">
    <location>
        <begin position="598"/>
        <end position="635"/>
    </location>
</feature>
<feature type="compositionally biased region" description="Low complexity" evidence="2">
    <location>
        <begin position="601"/>
        <end position="612"/>
    </location>
</feature>
<feature type="compositionally biased region" description="Basic and acidic residues" evidence="2">
    <location>
        <begin position="620"/>
        <end position="635"/>
    </location>
</feature>
<feature type="modified residue" description="Phosphothreonine; by autocatalysis" evidence="1">
    <location>
        <position position="198"/>
    </location>
</feature>
<protein>
    <recommendedName>
        <fullName evidence="1">Chaperone protein DnaK</fullName>
    </recommendedName>
    <alternativeName>
        <fullName evidence="1">HSP70</fullName>
    </alternativeName>
    <alternativeName>
        <fullName evidence="1">Heat shock 70 kDa protein</fullName>
    </alternativeName>
    <alternativeName>
        <fullName evidence="1">Heat shock protein 70</fullName>
    </alternativeName>
</protein>
<sequence length="635" mass="69293">MGKIIGIDLGTTNSCVAIMEHGKPVVIQNSEGGRTTPSIVAYTNKGERLVGQVAKNQMVTNPENTIYSIKRFMGRRFEEVASEIKMVPYKIEKGLNGDARVNISNIKKQMSPPEISAATLTKMKETAEAYLGEKVTEAVITVPAYFNDAQRQATKDAGKIAGLEVKRIVNEPTAAALAYGIEKKHEEIVAVYDLGGGTFDISILELGDGVFEVKSTNGDTHLGGDNFDDEIIKHLISEFKKESAIDLSNDKMALQRLKEAAEKAKIELSGAQEASINLPFITADANGPKHLQYTLTRAKFEQMVDHLVQKTKEPCLKAIKDAGLKASDINEVILVGGSTRIPAIQKIVKDIFGQDPNKGVNPDEAVAIGAAIQGGILTGETKDMVLLDVTPLSLGIETLGGVMTKLIERNTTIPTKKSQVFSTAADNQTSVDIKVLQGEREMAAQNRILGNFILDGIPAAPRGVPQIEVSFDIDANGIVHVSAKDMGTGKEQKIRIESSSGLSESEIDRMVKDAEAHAEEDKKLKENIEAKNTANSLIYQTEKSLKEYSEKISSEDKEAIENKIKELKESLDKEDISLIKSRTEELQKASYKIAEMMYKDSSQQNASNQQENGTQSNTSEEGKEADYEVVDEDKK</sequence>
<keyword id="KW-0067">ATP-binding</keyword>
<keyword id="KW-0143">Chaperone</keyword>
<keyword id="KW-0547">Nucleotide-binding</keyword>
<keyword id="KW-0597">Phosphoprotein</keyword>
<keyword id="KW-0346">Stress response</keyword>
<proteinExistence type="inferred from homology"/>
<name>DNAK_BORGP</name>
<organism>
    <name type="scientific">Borrelia garinii subsp. bavariensis (strain ATCC BAA-2496 / DSM 23469 / PBi)</name>
    <name type="common">Borreliella bavariensis</name>
    <dbReference type="NCBI Taxonomy" id="290434"/>
    <lineage>
        <taxon>Bacteria</taxon>
        <taxon>Pseudomonadati</taxon>
        <taxon>Spirochaetota</taxon>
        <taxon>Spirochaetia</taxon>
        <taxon>Spirochaetales</taxon>
        <taxon>Borreliaceae</taxon>
        <taxon>Borreliella</taxon>
    </lineage>
</organism>
<evidence type="ECO:0000255" key="1">
    <source>
        <dbReference type="HAMAP-Rule" id="MF_00332"/>
    </source>
</evidence>
<evidence type="ECO:0000256" key="2">
    <source>
        <dbReference type="SAM" id="MobiDB-lite"/>
    </source>
</evidence>
<reference key="1">
    <citation type="journal article" date="2004" name="Nucleic Acids Res.">
        <title>Comparative analysis of the Borrelia garinii genome.</title>
        <authorList>
            <person name="Gloeckner G."/>
            <person name="Lehmann R."/>
            <person name="Romualdi A."/>
            <person name="Pradella S."/>
            <person name="Schulte-Spechtel U."/>
            <person name="Schilhabel M."/>
            <person name="Wilske B."/>
            <person name="Suehnel J."/>
            <person name="Platzer M."/>
        </authorList>
    </citation>
    <scope>NUCLEOTIDE SEQUENCE [LARGE SCALE GENOMIC DNA]</scope>
    <source>
        <strain>ATCC BAA-2496 / DSM 23469 / PBi</strain>
    </source>
</reference>
<accession>Q661A3</accession>
<comment type="function">
    <text evidence="1">Acts as a chaperone.</text>
</comment>
<comment type="induction">
    <text evidence="1">By stress conditions e.g. heat shock.</text>
</comment>
<comment type="similarity">
    <text evidence="1">Belongs to the heat shock protein 70 family.</text>
</comment>
<dbReference type="EMBL" id="CP000013">
    <property type="protein sequence ID" value="AAU07368.1"/>
    <property type="molecule type" value="Genomic_DNA"/>
</dbReference>
<dbReference type="RefSeq" id="WP_011193830.1">
    <property type="nucleotide sequence ID" value="NZ_CP028872.1"/>
</dbReference>
<dbReference type="SMR" id="Q661A3"/>
<dbReference type="GeneID" id="45161311"/>
<dbReference type="KEGG" id="bga:BG0529"/>
<dbReference type="eggNOG" id="COG0443">
    <property type="taxonomic scope" value="Bacteria"/>
</dbReference>
<dbReference type="HOGENOM" id="CLU_005965_2_4_12"/>
<dbReference type="OrthoDB" id="9766019at2"/>
<dbReference type="Proteomes" id="UP000002276">
    <property type="component" value="Chromosome"/>
</dbReference>
<dbReference type="GO" id="GO:0005524">
    <property type="term" value="F:ATP binding"/>
    <property type="evidence" value="ECO:0007669"/>
    <property type="project" value="UniProtKB-UniRule"/>
</dbReference>
<dbReference type="GO" id="GO:0140662">
    <property type="term" value="F:ATP-dependent protein folding chaperone"/>
    <property type="evidence" value="ECO:0007669"/>
    <property type="project" value="InterPro"/>
</dbReference>
<dbReference type="GO" id="GO:0051082">
    <property type="term" value="F:unfolded protein binding"/>
    <property type="evidence" value="ECO:0007669"/>
    <property type="project" value="InterPro"/>
</dbReference>
<dbReference type="CDD" id="cd10234">
    <property type="entry name" value="ASKHA_NBD_HSP70_DnaK-like"/>
    <property type="match status" value="1"/>
</dbReference>
<dbReference type="FunFam" id="2.60.34.10:FF:000014">
    <property type="entry name" value="Chaperone protein DnaK HSP70"/>
    <property type="match status" value="1"/>
</dbReference>
<dbReference type="FunFam" id="3.30.420.40:FF:000020">
    <property type="entry name" value="Chaperone protein HscA homolog"/>
    <property type="match status" value="1"/>
</dbReference>
<dbReference type="FunFam" id="1.20.1270.10:FF:000001">
    <property type="entry name" value="Molecular chaperone DnaK"/>
    <property type="match status" value="1"/>
</dbReference>
<dbReference type="FunFam" id="3.30.420.40:FF:000004">
    <property type="entry name" value="Molecular chaperone DnaK"/>
    <property type="match status" value="1"/>
</dbReference>
<dbReference type="FunFam" id="3.90.640.10:FF:000003">
    <property type="entry name" value="Molecular chaperone DnaK"/>
    <property type="match status" value="1"/>
</dbReference>
<dbReference type="Gene3D" id="1.20.1270.10">
    <property type="match status" value="1"/>
</dbReference>
<dbReference type="Gene3D" id="3.30.420.40">
    <property type="match status" value="2"/>
</dbReference>
<dbReference type="Gene3D" id="3.90.640.10">
    <property type="entry name" value="Actin, Chain A, domain 4"/>
    <property type="match status" value="1"/>
</dbReference>
<dbReference type="Gene3D" id="2.60.34.10">
    <property type="entry name" value="Substrate Binding Domain Of DNAk, Chain A, domain 1"/>
    <property type="match status" value="1"/>
</dbReference>
<dbReference type="HAMAP" id="MF_00332">
    <property type="entry name" value="DnaK"/>
    <property type="match status" value="1"/>
</dbReference>
<dbReference type="InterPro" id="IPR043129">
    <property type="entry name" value="ATPase_NBD"/>
</dbReference>
<dbReference type="InterPro" id="IPR012725">
    <property type="entry name" value="Chaperone_DnaK"/>
</dbReference>
<dbReference type="InterPro" id="IPR018181">
    <property type="entry name" value="Heat_shock_70_CS"/>
</dbReference>
<dbReference type="InterPro" id="IPR029048">
    <property type="entry name" value="HSP70_C_sf"/>
</dbReference>
<dbReference type="InterPro" id="IPR029047">
    <property type="entry name" value="HSP70_peptide-bd_sf"/>
</dbReference>
<dbReference type="InterPro" id="IPR013126">
    <property type="entry name" value="Hsp_70_fam"/>
</dbReference>
<dbReference type="NCBIfam" id="NF001413">
    <property type="entry name" value="PRK00290.1"/>
    <property type="match status" value="1"/>
</dbReference>
<dbReference type="NCBIfam" id="NF003520">
    <property type="entry name" value="PRK05183.1"/>
    <property type="match status" value="1"/>
</dbReference>
<dbReference type="NCBIfam" id="TIGR02350">
    <property type="entry name" value="prok_dnaK"/>
    <property type="match status" value="1"/>
</dbReference>
<dbReference type="PANTHER" id="PTHR19375">
    <property type="entry name" value="HEAT SHOCK PROTEIN 70KDA"/>
    <property type="match status" value="1"/>
</dbReference>
<dbReference type="Pfam" id="PF00012">
    <property type="entry name" value="HSP70"/>
    <property type="match status" value="1"/>
</dbReference>
<dbReference type="PRINTS" id="PR00301">
    <property type="entry name" value="HEATSHOCK70"/>
</dbReference>
<dbReference type="SUPFAM" id="SSF53067">
    <property type="entry name" value="Actin-like ATPase domain"/>
    <property type="match status" value="2"/>
</dbReference>
<dbReference type="SUPFAM" id="SSF100934">
    <property type="entry name" value="Heat shock protein 70kD (HSP70), C-terminal subdomain"/>
    <property type="match status" value="1"/>
</dbReference>
<dbReference type="SUPFAM" id="SSF100920">
    <property type="entry name" value="Heat shock protein 70kD (HSP70), peptide-binding domain"/>
    <property type="match status" value="1"/>
</dbReference>
<dbReference type="PROSITE" id="PS00297">
    <property type="entry name" value="HSP70_1"/>
    <property type="match status" value="1"/>
</dbReference>
<dbReference type="PROSITE" id="PS00329">
    <property type="entry name" value="HSP70_2"/>
    <property type="match status" value="1"/>
</dbReference>
<dbReference type="PROSITE" id="PS01036">
    <property type="entry name" value="HSP70_3"/>
    <property type="match status" value="1"/>
</dbReference>